<reference key="1">
    <citation type="journal article" date="1997" name="Nature">
        <title>Molecular basis of symbiosis between Rhizobium and legumes.</title>
        <authorList>
            <person name="Freiberg C.A."/>
            <person name="Fellay R."/>
            <person name="Bairoch A."/>
            <person name="Broughton W.J."/>
            <person name="Rosenthal A."/>
            <person name="Perret X."/>
        </authorList>
    </citation>
    <scope>NUCLEOTIDE SEQUENCE [LARGE SCALE GENOMIC DNA]</scope>
    <source>
        <strain>NBRC 101917 / NGR234</strain>
    </source>
</reference>
<reference key="2">
    <citation type="journal article" date="2009" name="Appl. Environ. Microbiol.">
        <title>Rhizobium sp. strain NGR234 possesses a remarkable number of secretion systems.</title>
        <authorList>
            <person name="Schmeisser C."/>
            <person name="Liesegang H."/>
            <person name="Krysciak D."/>
            <person name="Bakkou N."/>
            <person name="Le Quere A."/>
            <person name="Wollherr A."/>
            <person name="Heinemeyer I."/>
            <person name="Morgenstern B."/>
            <person name="Pommerening-Roeser A."/>
            <person name="Flores M."/>
            <person name="Palacios R."/>
            <person name="Brenner S."/>
            <person name="Gottschalk G."/>
            <person name="Schmitz R.A."/>
            <person name="Broughton W.J."/>
            <person name="Perret X."/>
            <person name="Strittmatter A.W."/>
            <person name="Streit W.R."/>
        </authorList>
    </citation>
    <scope>NUCLEOTIDE SEQUENCE [LARGE SCALE GENOMIC DNA]</scope>
    <source>
        <strain>NBRC 101917 / NGR234</strain>
    </source>
</reference>
<proteinExistence type="predicted"/>
<name>Y4IJ_SINFN</name>
<organism>
    <name type="scientific">Sinorhizobium fredii (strain NBRC 101917 / NGR234)</name>
    <dbReference type="NCBI Taxonomy" id="394"/>
    <lineage>
        <taxon>Bacteria</taxon>
        <taxon>Pseudomonadati</taxon>
        <taxon>Pseudomonadota</taxon>
        <taxon>Alphaproteobacteria</taxon>
        <taxon>Hyphomicrobiales</taxon>
        <taxon>Rhizobiaceae</taxon>
        <taxon>Sinorhizobium/Ensifer group</taxon>
        <taxon>Sinorhizobium</taxon>
    </lineage>
</organism>
<feature type="chain" id="PRO_0000200862" description="Uncharacterized protein y4iJ">
    <location>
        <begin position="1"/>
        <end position="596"/>
    </location>
</feature>
<feature type="transmembrane region" description="Helical" evidence="1">
    <location>
        <begin position="7"/>
        <end position="26"/>
    </location>
</feature>
<dbReference type="EMBL" id="U00090">
    <property type="protein sequence ID" value="AAB91705.1"/>
    <property type="molecule type" value="Genomic_DNA"/>
</dbReference>
<dbReference type="RefSeq" id="NP_443903.1">
    <property type="nucleotide sequence ID" value="NC_000914.2"/>
</dbReference>
<dbReference type="RefSeq" id="WP_010875339.1">
    <property type="nucleotide sequence ID" value="NC_000914.2"/>
</dbReference>
<dbReference type="KEGG" id="rhi:NGR_a03230"/>
<dbReference type="PATRIC" id="fig|394.7.peg.333"/>
<dbReference type="eggNOG" id="COG2010">
    <property type="taxonomic scope" value="Bacteria"/>
</dbReference>
<dbReference type="HOGENOM" id="CLU_014386_1_0_5"/>
<dbReference type="OrthoDB" id="417271at2"/>
<dbReference type="Proteomes" id="UP000001054">
    <property type="component" value="Plasmid pNGR234a"/>
</dbReference>
<dbReference type="GO" id="GO:0016020">
    <property type="term" value="C:membrane"/>
    <property type="evidence" value="ECO:0007669"/>
    <property type="project" value="UniProtKB-SubCell"/>
</dbReference>
<dbReference type="GO" id="GO:0004130">
    <property type="term" value="F:cytochrome-c peroxidase activity"/>
    <property type="evidence" value="ECO:0007669"/>
    <property type="project" value="TreeGrafter"/>
</dbReference>
<dbReference type="GO" id="GO:0009055">
    <property type="term" value="F:electron transfer activity"/>
    <property type="evidence" value="ECO:0007669"/>
    <property type="project" value="InterPro"/>
</dbReference>
<dbReference type="GO" id="GO:0020037">
    <property type="term" value="F:heme binding"/>
    <property type="evidence" value="ECO:0007669"/>
    <property type="project" value="InterPro"/>
</dbReference>
<dbReference type="Gene3D" id="1.10.760.10">
    <property type="entry name" value="Cytochrome c-like domain"/>
    <property type="match status" value="1"/>
</dbReference>
<dbReference type="InterPro" id="IPR036909">
    <property type="entry name" value="Cyt_c-like_dom_sf"/>
</dbReference>
<dbReference type="InterPro" id="IPR047758">
    <property type="entry name" value="CytoC_perox"/>
</dbReference>
<dbReference type="InterPro" id="IPR051395">
    <property type="entry name" value="Cytochrome_c_Peroxidase/MauG"/>
</dbReference>
<dbReference type="NCBIfam" id="NF040606">
    <property type="entry name" value="CytoC_perox"/>
    <property type="match status" value="1"/>
</dbReference>
<dbReference type="PANTHER" id="PTHR30600:SF9">
    <property type="entry name" value="BLR7738 PROTEIN"/>
    <property type="match status" value="1"/>
</dbReference>
<dbReference type="PANTHER" id="PTHR30600">
    <property type="entry name" value="CYTOCHROME C PEROXIDASE-RELATED"/>
    <property type="match status" value="1"/>
</dbReference>
<dbReference type="Pfam" id="PF21419">
    <property type="entry name" value="RoxA-like_Cyt-c"/>
    <property type="match status" value="1"/>
</dbReference>
<dbReference type="SUPFAM" id="SSF46626">
    <property type="entry name" value="Cytochrome c"/>
    <property type="match status" value="1"/>
</dbReference>
<comment type="subcellular location">
    <subcellularLocation>
        <location evidence="2">Membrane</location>
        <topology evidence="2">Single-pass membrane protein</topology>
    </subcellularLocation>
</comment>
<sequence>MKRKSRFWPILLGFTVLVAAGLYYVVRMFSVDLPDYPKVDKVTWLEQNWSQSQRGWMHHADQGTVTFSMPYEWLAALEQPTFTLTAGPPFLSSDYLDRFGFITADSSGLPVGFAHGGDLVDPKTAQPWVNPATGKPLTTVGLTCAACHTGRFTYKGTAVMVDGGPALTDLGKFRKASGLALFFTRYAPFRFDRFATAVLGPQADEKARAVLKKQLDKVLAGGRIEVDLDKKVAEKSIEEGFGRLDALNRIGNQVFSLDLERPENYVAQSAPVAFPHIWDTSWFDWVQYNASIMQPMVRNAGEALGVRAFINLTKSEQPLFASTVKVDTIFEIEQQLAGKQPTAENGFTGLRPPRWPSNLFGSIDTKLATEGAAVYADRCQGCHLPPVGSEGFWEQKHWTNENSAGERYLRVPIINVENIGTDPAQAQSMAERKVKLPSELGIDTDSFGSALGALVAKTAARWYDNQTPPVPAEQREIMNGNRQNGIQAPLAYKARPLDGIWATPPFLHNGSVPTIDALLSPAGERPKTFWLGNREYDPDKLGYLTDELKGGFKFDTAKPGNSNAGHEFSDTPGPGVIGPALKPDEKAALIAYLKTL</sequence>
<gene>
    <name type="ordered locus">NGR_a03230</name>
    <name type="ORF">y4iJ</name>
</gene>
<protein>
    <recommendedName>
        <fullName>Uncharacterized protein y4iJ</fullName>
    </recommendedName>
</protein>
<evidence type="ECO:0000255" key="1"/>
<evidence type="ECO:0000305" key="2"/>
<accession>P55493</accession>
<keyword id="KW-0472">Membrane</keyword>
<keyword id="KW-0614">Plasmid</keyword>
<keyword id="KW-1185">Reference proteome</keyword>
<keyword id="KW-0812">Transmembrane</keyword>
<keyword id="KW-1133">Transmembrane helix</keyword>
<geneLocation type="plasmid">
    <name>sym pNGR234a</name>
</geneLocation>